<feature type="chain" id="PRO_0000163063" description="NADPH-dependent 7-cyano-7-deazaguanine reductase">
    <location>
        <begin position="1"/>
        <end position="281"/>
    </location>
</feature>
<feature type="active site" description="Thioimide intermediate" evidence="1">
    <location>
        <position position="188"/>
    </location>
</feature>
<feature type="active site" description="Proton donor" evidence="1">
    <location>
        <position position="195"/>
    </location>
</feature>
<feature type="binding site" evidence="1">
    <location>
        <begin position="87"/>
        <end position="89"/>
    </location>
    <ligand>
        <name>substrate</name>
    </ligand>
</feature>
<feature type="binding site" evidence="1">
    <location>
        <begin position="89"/>
        <end position="90"/>
    </location>
    <ligand>
        <name>NADPH</name>
        <dbReference type="ChEBI" id="CHEBI:57783"/>
    </ligand>
</feature>
<feature type="binding site" evidence="1">
    <location>
        <begin position="227"/>
        <end position="228"/>
    </location>
    <ligand>
        <name>substrate</name>
    </ligand>
</feature>
<feature type="binding site" evidence="1">
    <location>
        <begin position="256"/>
        <end position="257"/>
    </location>
    <ligand>
        <name>NADPH</name>
        <dbReference type="ChEBI" id="CHEBI:57783"/>
    </ligand>
</feature>
<organism>
    <name type="scientific">Aliivibrio fischeri (strain ATCC 700601 / ES114)</name>
    <name type="common">Vibrio fischeri</name>
    <dbReference type="NCBI Taxonomy" id="312309"/>
    <lineage>
        <taxon>Bacteria</taxon>
        <taxon>Pseudomonadati</taxon>
        <taxon>Pseudomonadota</taxon>
        <taxon>Gammaproteobacteria</taxon>
        <taxon>Vibrionales</taxon>
        <taxon>Vibrionaceae</taxon>
        <taxon>Aliivibrio</taxon>
    </lineage>
</organism>
<sequence length="281" mass="32314">MTKYTNADELKSLTLGQKTEYKHTYEPELLQAVPRSLNRDDLALGDELPFVGCDVWTLYELSWLNQNGLPQVAVGEVALPATSPNLVESKSFKLYLNSFNQTKFTSWDEVKETLVKDLSACAGETVKVDIFPVQRYSQQPIVDMQGECIDDQDIIIDDYEFNAAYLESSTSDVNIEETLHSHLLKSNCLITNQPDWGSVEIQYKGKKIDREKLLRYLISFRQHNEFHEQCVERIYTDIMKYCAPESLTVFARYTRRGGLDINPFRSSHLLAPKDNLRLARQ</sequence>
<reference key="1">
    <citation type="journal article" date="2005" name="Proc. Natl. Acad. Sci. U.S.A.">
        <title>Complete genome sequence of Vibrio fischeri: a symbiotic bacterium with pathogenic congeners.</title>
        <authorList>
            <person name="Ruby E.G."/>
            <person name="Urbanowski M."/>
            <person name="Campbell J."/>
            <person name="Dunn A."/>
            <person name="Faini M."/>
            <person name="Gunsalus R."/>
            <person name="Lostroh P."/>
            <person name="Lupp C."/>
            <person name="McCann J."/>
            <person name="Millikan D."/>
            <person name="Schaefer A."/>
            <person name="Stabb E."/>
            <person name="Stevens A."/>
            <person name="Visick K."/>
            <person name="Whistler C."/>
            <person name="Greenberg E.P."/>
        </authorList>
    </citation>
    <scope>NUCLEOTIDE SEQUENCE [LARGE SCALE GENOMIC DNA]</scope>
    <source>
        <strain>ATCC 700601 / ES114</strain>
    </source>
</reference>
<evidence type="ECO:0000255" key="1">
    <source>
        <dbReference type="HAMAP-Rule" id="MF_00817"/>
    </source>
</evidence>
<protein>
    <recommendedName>
        <fullName evidence="1">NADPH-dependent 7-cyano-7-deazaguanine reductase</fullName>
        <ecNumber evidence="1">1.7.1.13</ecNumber>
    </recommendedName>
    <alternativeName>
        <fullName evidence="1">7-cyano-7-carbaguanine reductase</fullName>
    </alternativeName>
    <alternativeName>
        <fullName evidence="1">NADPH-dependent nitrile oxidoreductase</fullName>
    </alternativeName>
    <alternativeName>
        <fullName evidence="1">PreQ(0) reductase</fullName>
    </alternativeName>
</protein>
<dbReference type="EC" id="1.7.1.13" evidence="1"/>
<dbReference type="EMBL" id="CP000020">
    <property type="protein sequence ID" value="AAW85093.1"/>
    <property type="molecule type" value="Genomic_DNA"/>
</dbReference>
<dbReference type="RefSeq" id="WP_011261348.1">
    <property type="nucleotide sequence ID" value="NC_006840.2"/>
</dbReference>
<dbReference type="RefSeq" id="YP_203981.1">
    <property type="nucleotide sequence ID" value="NC_006840.2"/>
</dbReference>
<dbReference type="SMR" id="Q5E7A3"/>
<dbReference type="STRING" id="312309.VF_0598"/>
<dbReference type="EnsemblBacteria" id="AAW85093">
    <property type="protein sequence ID" value="AAW85093"/>
    <property type="gene ID" value="VF_0598"/>
</dbReference>
<dbReference type="GeneID" id="54163251"/>
<dbReference type="KEGG" id="vfi:VF_0598"/>
<dbReference type="PATRIC" id="fig|312309.11.peg.590"/>
<dbReference type="eggNOG" id="COG0780">
    <property type="taxonomic scope" value="Bacteria"/>
</dbReference>
<dbReference type="eggNOG" id="COG2904">
    <property type="taxonomic scope" value="Bacteria"/>
</dbReference>
<dbReference type="HOGENOM" id="CLU_054738_0_0_6"/>
<dbReference type="OrthoDB" id="9789995at2"/>
<dbReference type="UniPathway" id="UPA00392"/>
<dbReference type="Proteomes" id="UP000000537">
    <property type="component" value="Chromosome I"/>
</dbReference>
<dbReference type="GO" id="GO:0005737">
    <property type="term" value="C:cytoplasm"/>
    <property type="evidence" value="ECO:0007669"/>
    <property type="project" value="UniProtKB-SubCell"/>
</dbReference>
<dbReference type="GO" id="GO:0033739">
    <property type="term" value="F:preQ1 synthase activity"/>
    <property type="evidence" value="ECO:0007669"/>
    <property type="project" value="UniProtKB-UniRule"/>
</dbReference>
<dbReference type="GO" id="GO:0008616">
    <property type="term" value="P:queuosine biosynthetic process"/>
    <property type="evidence" value="ECO:0007669"/>
    <property type="project" value="UniProtKB-UniRule"/>
</dbReference>
<dbReference type="GO" id="GO:0006400">
    <property type="term" value="P:tRNA modification"/>
    <property type="evidence" value="ECO:0007669"/>
    <property type="project" value="UniProtKB-UniRule"/>
</dbReference>
<dbReference type="Gene3D" id="3.30.1130.10">
    <property type="match status" value="2"/>
</dbReference>
<dbReference type="HAMAP" id="MF_00817">
    <property type="entry name" value="QueF_type2"/>
    <property type="match status" value="1"/>
</dbReference>
<dbReference type="InterPro" id="IPR043133">
    <property type="entry name" value="GTP-CH-I_C/QueF"/>
</dbReference>
<dbReference type="InterPro" id="IPR050084">
    <property type="entry name" value="NADPH_dep_7-cyano-7-deazaG_red"/>
</dbReference>
<dbReference type="InterPro" id="IPR029500">
    <property type="entry name" value="QueF"/>
</dbReference>
<dbReference type="InterPro" id="IPR029139">
    <property type="entry name" value="QueF_N"/>
</dbReference>
<dbReference type="InterPro" id="IPR016428">
    <property type="entry name" value="QueF_type2"/>
</dbReference>
<dbReference type="NCBIfam" id="TIGR03138">
    <property type="entry name" value="QueF"/>
    <property type="match status" value="1"/>
</dbReference>
<dbReference type="PANTHER" id="PTHR34354">
    <property type="entry name" value="NADPH-DEPENDENT 7-CYANO-7-DEAZAGUANINE REDUCTASE"/>
    <property type="match status" value="1"/>
</dbReference>
<dbReference type="PANTHER" id="PTHR34354:SF1">
    <property type="entry name" value="NADPH-DEPENDENT 7-CYANO-7-DEAZAGUANINE REDUCTASE"/>
    <property type="match status" value="1"/>
</dbReference>
<dbReference type="Pfam" id="PF14489">
    <property type="entry name" value="QueF"/>
    <property type="match status" value="1"/>
</dbReference>
<dbReference type="Pfam" id="PF14819">
    <property type="entry name" value="QueF_N"/>
    <property type="match status" value="1"/>
</dbReference>
<dbReference type="PIRSF" id="PIRSF004750">
    <property type="entry name" value="Nitrile_oxidored_YqcD_prd"/>
    <property type="match status" value="1"/>
</dbReference>
<dbReference type="SUPFAM" id="SSF55620">
    <property type="entry name" value="Tetrahydrobiopterin biosynthesis enzymes-like"/>
    <property type="match status" value="1"/>
</dbReference>
<accession>Q5E7A3</accession>
<name>QUEF_ALIF1</name>
<gene>
    <name evidence="1" type="primary">queF</name>
    <name type="ordered locus">VF_0598</name>
</gene>
<comment type="function">
    <text evidence="1">Catalyzes the NADPH-dependent reduction of 7-cyano-7-deazaguanine (preQ0) to 7-aminomethyl-7-deazaguanine (preQ1).</text>
</comment>
<comment type="catalytic activity">
    <reaction evidence="1">
        <text>7-aminomethyl-7-carbaguanine + 2 NADP(+) = 7-cyano-7-deazaguanine + 2 NADPH + 3 H(+)</text>
        <dbReference type="Rhea" id="RHEA:13409"/>
        <dbReference type="ChEBI" id="CHEBI:15378"/>
        <dbReference type="ChEBI" id="CHEBI:45075"/>
        <dbReference type="ChEBI" id="CHEBI:57783"/>
        <dbReference type="ChEBI" id="CHEBI:58349"/>
        <dbReference type="ChEBI" id="CHEBI:58703"/>
        <dbReference type="EC" id="1.7.1.13"/>
    </reaction>
</comment>
<comment type="pathway">
    <text evidence="1">tRNA modification; tRNA-queuosine biosynthesis.</text>
</comment>
<comment type="subunit">
    <text evidence="1">Homodimer.</text>
</comment>
<comment type="subcellular location">
    <subcellularLocation>
        <location evidence="1">Cytoplasm</location>
    </subcellularLocation>
</comment>
<comment type="similarity">
    <text evidence="1">Belongs to the GTP cyclohydrolase I family. QueF type 2 subfamily.</text>
</comment>
<keyword id="KW-0963">Cytoplasm</keyword>
<keyword id="KW-0521">NADP</keyword>
<keyword id="KW-0560">Oxidoreductase</keyword>
<keyword id="KW-0671">Queuosine biosynthesis</keyword>
<keyword id="KW-1185">Reference proteome</keyword>
<proteinExistence type="inferred from homology"/>